<organism>
    <name type="scientific">Methylobacterium radiotolerans (strain ATCC 27329 / DSM 1819 / JCM 2831 / NBRC 15690 / NCIMB 10815 / 0-1)</name>
    <dbReference type="NCBI Taxonomy" id="426355"/>
    <lineage>
        <taxon>Bacteria</taxon>
        <taxon>Pseudomonadati</taxon>
        <taxon>Pseudomonadota</taxon>
        <taxon>Alphaproteobacteria</taxon>
        <taxon>Hyphomicrobiales</taxon>
        <taxon>Methylobacteriaceae</taxon>
        <taxon>Methylobacterium</taxon>
    </lineage>
</organism>
<proteinExistence type="inferred from homology"/>
<dbReference type="EC" id="6.2.1.1" evidence="1"/>
<dbReference type="EMBL" id="CP001001">
    <property type="protein sequence ID" value="ACB27543.1"/>
    <property type="molecule type" value="Genomic_DNA"/>
</dbReference>
<dbReference type="RefSeq" id="WP_012322485.1">
    <property type="nucleotide sequence ID" value="NC_010505.1"/>
</dbReference>
<dbReference type="SMR" id="B1M0M1"/>
<dbReference type="STRING" id="426355.Mrad2831_5598"/>
<dbReference type="GeneID" id="6141672"/>
<dbReference type="KEGG" id="mrd:Mrad2831_5598"/>
<dbReference type="PATRIC" id="fig|426355.14.peg.5663"/>
<dbReference type="eggNOG" id="COG0365">
    <property type="taxonomic scope" value="Bacteria"/>
</dbReference>
<dbReference type="HOGENOM" id="CLU_000022_3_6_5"/>
<dbReference type="OrthoDB" id="9803968at2"/>
<dbReference type="Proteomes" id="UP000006589">
    <property type="component" value="Chromosome"/>
</dbReference>
<dbReference type="GO" id="GO:0005829">
    <property type="term" value="C:cytosol"/>
    <property type="evidence" value="ECO:0007669"/>
    <property type="project" value="TreeGrafter"/>
</dbReference>
<dbReference type="GO" id="GO:0003987">
    <property type="term" value="F:acetate-CoA ligase activity"/>
    <property type="evidence" value="ECO:0007669"/>
    <property type="project" value="UniProtKB-UniRule"/>
</dbReference>
<dbReference type="GO" id="GO:0016208">
    <property type="term" value="F:AMP binding"/>
    <property type="evidence" value="ECO:0007669"/>
    <property type="project" value="InterPro"/>
</dbReference>
<dbReference type="GO" id="GO:0005524">
    <property type="term" value="F:ATP binding"/>
    <property type="evidence" value="ECO:0007669"/>
    <property type="project" value="UniProtKB-KW"/>
</dbReference>
<dbReference type="GO" id="GO:0046872">
    <property type="term" value="F:metal ion binding"/>
    <property type="evidence" value="ECO:0007669"/>
    <property type="project" value="UniProtKB-KW"/>
</dbReference>
<dbReference type="GO" id="GO:0019427">
    <property type="term" value="P:acetyl-CoA biosynthetic process from acetate"/>
    <property type="evidence" value="ECO:0007669"/>
    <property type="project" value="InterPro"/>
</dbReference>
<dbReference type="CDD" id="cd05966">
    <property type="entry name" value="ACS"/>
    <property type="match status" value="1"/>
</dbReference>
<dbReference type="FunFam" id="3.30.300.30:FF:000004">
    <property type="entry name" value="Acetyl-coenzyme A synthetase"/>
    <property type="match status" value="1"/>
</dbReference>
<dbReference type="FunFam" id="3.40.50.12780:FF:000001">
    <property type="entry name" value="Acetyl-coenzyme A synthetase"/>
    <property type="match status" value="1"/>
</dbReference>
<dbReference type="Gene3D" id="3.30.300.30">
    <property type="match status" value="1"/>
</dbReference>
<dbReference type="Gene3D" id="3.40.50.12780">
    <property type="entry name" value="N-terminal domain of ligase-like"/>
    <property type="match status" value="1"/>
</dbReference>
<dbReference type="HAMAP" id="MF_01123">
    <property type="entry name" value="Ac_CoA_synth"/>
    <property type="match status" value="1"/>
</dbReference>
<dbReference type="InterPro" id="IPR011904">
    <property type="entry name" value="Ac_CoA_lig"/>
</dbReference>
<dbReference type="InterPro" id="IPR032387">
    <property type="entry name" value="ACAS_N"/>
</dbReference>
<dbReference type="InterPro" id="IPR025110">
    <property type="entry name" value="AMP-bd_C"/>
</dbReference>
<dbReference type="InterPro" id="IPR045851">
    <property type="entry name" value="AMP-bd_C_sf"/>
</dbReference>
<dbReference type="InterPro" id="IPR020845">
    <property type="entry name" value="AMP-binding_CS"/>
</dbReference>
<dbReference type="InterPro" id="IPR000873">
    <property type="entry name" value="AMP-dep_synth/lig_dom"/>
</dbReference>
<dbReference type="InterPro" id="IPR042099">
    <property type="entry name" value="ANL_N_sf"/>
</dbReference>
<dbReference type="NCBIfam" id="TIGR02188">
    <property type="entry name" value="Ac_CoA_lig_AcsA"/>
    <property type="match status" value="1"/>
</dbReference>
<dbReference type="NCBIfam" id="NF001208">
    <property type="entry name" value="PRK00174.1"/>
    <property type="match status" value="1"/>
</dbReference>
<dbReference type="PANTHER" id="PTHR24095">
    <property type="entry name" value="ACETYL-COENZYME A SYNTHETASE"/>
    <property type="match status" value="1"/>
</dbReference>
<dbReference type="PANTHER" id="PTHR24095:SF14">
    <property type="entry name" value="ACETYL-COENZYME A SYNTHETASE 1"/>
    <property type="match status" value="1"/>
</dbReference>
<dbReference type="Pfam" id="PF16177">
    <property type="entry name" value="ACAS_N"/>
    <property type="match status" value="1"/>
</dbReference>
<dbReference type="Pfam" id="PF00501">
    <property type="entry name" value="AMP-binding"/>
    <property type="match status" value="1"/>
</dbReference>
<dbReference type="Pfam" id="PF13193">
    <property type="entry name" value="AMP-binding_C"/>
    <property type="match status" value="1"/>
</dbReference>
<dbReference type="SUPFAM" id="SSF56801">
    <property type="entry name" value="Acetyl-CoA synthetase-like"/>
    <property type="match status" value="1"/>
</dbReference>
<dbReference type="PROSITE" id="PS00455">
    <property type="entry name" value="AMP_BINDING"/>
    <property type="match status" value="1"/>
</dbReference>
<protein>
    <recommendedName>
        <fullName evidence="1">Acetyl-coenzyme A synthetase</fullName>
        <shortName evidence="1">AcCoA synthetase</shortName>
        <shortName evidence="1">Acs</shortName>
        <ecNumber evidence="1">6.2.1.1</ecNumber>
    </recommendedName>
    <alternativeName>
        <fullName evidence="1">Acetate--CoA ligase</fullName>
    </alternativeName>
    <alternativeName>
        <fullName evidence="1">Acyl-activating enzyme</fullName>
    </alternativeName>
</protein>
<feature type="chain" id="PRO_1000137269" description="Acetyl-coenzyme A synthetase">
    <location>
        <begin position="1"/>
        <end position="648"/>
    </location>
</feature>
<feature type="binding site" evidence="1">
    <location>
        <begin position="190"/>
        <end position="193"/>
    </location>
    <ligand>
        <name>CoA</name>
        <dbReference type="ChEBI" id="CHEBI:57287"/>
    </ligand>
</feature>
<feature type="binding site" evidence="1">
    <location>
        <position position="310"/>
    </location>
    <ligand>
        <name>CoA</name>
        <dbReference type="ChEBI" id="CHEBI:57287"/>
    </ligand>
</feature>
<feature type="binding site" evidence="1">
    <location>
        <begin position="386"/>
        <end position="388"/>
    </location>
    <ligand>
        <name>ATP</name>
        <dbReference type="ChEBI" id="CHEBI:30616"/>
    </ligand>
</feature>
<feature type="binding site" evidence="1">
    <location>
        <begin position="410"/>
        <end position="415"/>
    </location>
    <ligand>
        <name>ATP</name>
        <dbReference type="ChEBI" id="CHEBI:30616"/>
    </ligand>
</feature>
<feature type="binding site" evidence="1">
    <location>
        <position position="499"/>
    </location>
    <ligand>
        <name>ATP</name>
        <dbReference type="ChEBI" id="CHEBI:30616"/>
    </ligand>
</feature>
<feature type="binding site" evidence="1">
    <location>
        <position position="514"/>
    </location>
    <ligand>
        <name>ATP</name>
        <dbReference type="ChEBI" id="CHEBI:30616"/>
    </ligand>
</feature>
<feature type="binding site" evidence="1">
    <location>
        <position position="522"/>
    </location>
    <ligand>
        <name>CoA</name>
        <dbReference type="ChEBI" id="CHEBI:57287"/>
    </ligand>
</feature>
<feature type="binding site" evidence="1">
    <location>
        <position position="525"/>
    </location>
    <ligand>
        <name>ATP</name>
        <dbReference type="ChEBI" id="CHEBI:30616"/>
    </ligand>
</feature>
<feature type="binding site" evidence="1">
    <location>
        <position position="536"/>
    </location>
    <ligand>
        <name>Mg(2+)</name>
        <dbReference type="ChEBI" id="CHEBI:18420"/>
    </ligand>
</feature>
<feature type="binding site" evidence="1">
    <location>
        <position position="538"/>
    </location>
    <ligand>
        <name>Mg(2+)</name>
        <dbReference type="ChEBI" id="CHEBI:18420"/>
    </ligand>
</feature>
<feature type="binding site" evidence="1">
    <location>
        <position position="541"/>
    </location>
    <ligand>
        <name>Mg(2+)</name>
        <dbReference type="ChEBI" id="CHEBI:18420"/>
    </ligand>
</feature>
<feature type="binding site" evidence="1">
    <location>
        <position position="583"/>
    </location>
    <ligand>
        <name>CoA</name>
        <dbReference type="ChEBI" id="CHEBI:57287"/>
    </ligand>
</feature>
<feature type="modified residue" description="N6-acetyllysine" evidence="1">
    <location>
        <position position="608"/>
    </location>
</feature>
<name>ACSA_METRJ</name>
<keyword id="KW-0007">Acetylation</keyword>
<keyword id="KW-0067">ATP-binding</keyword>
<keyword id="KW-0436">Ligase</keyword>
<keyword id="KW-0460">Magnesium</keyword>
<keyword id="KW-0479">Metal-binding</keyword>
<keyword id="KW-0547">Nucleotide-binding</keyword>
<evidence type="ECO:0000255" key="1">
    <source>
        <dbReference type="HAMAP-Rule" id="MF_01123"/>
    </source>
</evidence>
<accession>B1M0M1</accession>
<comment type="function">
    <text evidence="1">Catalyzes the conversion of acetate into acetyl-CoA (AcCoA), an essential intermediate at the junction of anabolic and catabolic pathways. AcsA undergoes a two-step reaction. In the first half reaction, AcsA combines acetate with ATP to form acetyl-adenylate (AcAMP) intermediate. In the second half reaction, it can then transfer the acetyl group from AcAMP to the sulfhydryl group of CoA, forming the product AcCoA.</text>
</comment>
<comment type="catalytic activity">
    <reaction evidence="1">
        <text>acetate + ATP + CoA = acetyl-CoA + AMP + diphosphate</text>
        <dbReference type="Rhea" id="RHEA:23176"/>
        <dbReference type="ChEBI" id="CHEBI:30089"/>
        <dbReference type="ChEBI" id="CHEBI:30616"/>
        <dbReference type="ChEBI" id="CHEBI:33019"/>
        <dbReference type="ChEBI" id="CHEBI:57287"/>
        <dbReference type="ChEBI" id="CHEBI:57288"/>
        <dbReference type="ChEBI" id="CHEBI:456215"/>
        <dbReference type="EC" id="6.2.1.1"/>
    </reaction>
</comment>
<comment type="cofactor">
    <cofactor evidence="1">
        <name>Mg(2+)</name>
        <dbReference type="ChEBI" id="CHEBI:18420"/>
    </cofactor>
</comment>
<comment type="PTM">
    <text evidence="1">Acetylated. Deacetylation by the SIR2-homolog deacetylase activates the enzyme.</text>
</comment>
<comment type="similarity">
    <text evidence="1">Belongs to the ATP-dependent AMP-binding enzyme family.</text>
</comment>
<reference key="1">
    <citation type="submission" date="2008-03" db="EMBL/GenBank/DDBJ databases">
        <title>Complete sequence of chromosome of Methylobacterium radiotolerans JCM 2831.</title>
        <authorList>
            <consortium name="US DOE Joint Genome Institute"/>
            <person name="Copeland A."/>
            <person name="Lucas S."/>
            <person name="Lapidus A."/>
            <person name="Glavina del Rio T."/>
            <person name="Dalin E."/>
            <person name="Tice H."/>
            <person name="Bruce D."/>
            <person name="Goodwin L."/>
            <person name="Pitluck S."/>
            <person name="Kiss H."/>
            <person name="Brettin T."/>
            <person name="Detter J.C."/>
            <person name="Han C."/>
            <person name="Kuske C.R."/>
            <person name="Schmutz J."/>
            <person name="Larimer F."/>
            <person name="Land M."/>
            <person name="Hauser L."/>
            <person name="Kyrpides N."/>
            <person name="Mikhailova N."/>
            <person name="Marx C.J."/>
            <person name="Richardson P."/>
        </authorList>
    </citation>
    <scope>NUCLEOTIDE SEQUENCE [LARGE SCALE GENOMIC DNA]</scope>
    <source>
        <strain>ATCC 27329 / DSM 1819 / JCM 2831 / NBRC 15690 / NCIMB 10815 / 0-1</strain>
    </source>
</reference>
<gene>
    <name evidence="1" type="primary">acsA</name>
    <name type="ordered locus">Mrad2831_5598</name>
</gene>
<sequence>MEGKVIEVQSAWREGAHVDDAKYREMYAASVADPDAFWAEHGKRIDWMKPFSTVKNTSFEPGKVSIKWFEDGTTNVAHNCIDRHLETRGDQTAIIWEGDNPDEAKHISYRELHAQVCRMANVLRNRGVGKGDRVTLYMPMIPEAAYAMLACARLGAIHAIVFGGFSPDSLASRIQGCGSKVVITADEGLRGGRKVPLKANVDEAIKRLDADLVDHVIVVRRTGGSVAMEAGRDVYYDEAAEQVTDECPAVAVDAEHPLFILYTSGSTGQPKGVVHTTGGYLVYASMTHEYVFDYREGDVYWCTADVGWVTGHSYIVYGPLANGATTLMFEGIPTYPSTSRFWEVVDKHKVNIFYTAPTAIRSLMGGGEGPVKKTSRQSLRVLGSVGEPINPEAWEWYYNVVGDRRCSIVDTWWQTETGGILITPLPGATALKPGSATRPFFGVKPQMVDAEGKVLEGPCEGNLCIADSWPGQMRTVYGDHERFEQTYFSTYPGKYFTGDGARRDADGYYWITGRVDDVINVSGHRMGTAEVESSLVAHPKVAEAAVVGYPHNVKGQGIYAYVTLNDGEEGDDALRKELVTWVRKDIGPIASPDLIQFAPGLPKTRSGKIMRRILRKIAEDDFSSLGDTSTLAEPAVVDDLIENRQNRG</sequence>